<evidence type="ECO:0000255" key="1">
    <source>
        <dbReference type="HAMAP-Rule" id="MF_00600"/>
    </source>
</evidence>
<sequence length="545" mass="57851">MAAKDVVYSDVARNELLAGVEKLADAVRVTMGPKGRNVLLQRSFGAPHITKDGVSVAKEIELKHPVENMGAQLVKEVASKTADEAGDGTTTATVLAHAVFKEGLKYITAGANPVAVKRGMDKAVEAIIAELKKMSKTVENKEQIAQVATISANNDKKIGELIAEAMDKVGKDGVITVEEGKSLQDELEVVEGMQFDRGYLSPYFVTDTEKMVAELNDAYILLYDKKISNMKDLLPLLEQMVQAGNKPLLIIAEDIEGEALATLVVNKLRGVLNVCAVKAPGFGDRRKAMLQDIAILTGGQVISEELGRTLESATLADLGQAGRVVVDKENTTIVDGRGDKAAIEARIAQIKKEIEETTSDYDREKLQERLAKLSGGVAVIKVGAATETEMKEKKDRVDDALSATKAAVEEGIVIGGGAAILKAAKNISVNVEDADEKIGVDIVKQAVKAPIKQIAKNAGFEPGIVAMKVEEADENTGFNAATGEYVDMFKAGIIDPTKVERIALQNAVSVGSLLLTTEAAVTEVPEDKPAPAAPDMGGMGGMGMM</sequence>
<accession>B9L698</accession>
<gene>
    <name evidence="1" type="primary">groEL</name>
    <name evidence="1" type="synonym">groL</name>
    <name type="ordered locus">NAMH_1496</name>
</gene>
<protein>
    <recommendedName>
        <fullName evidence="1">Chaperonin GroEL</fullName>
        <ecNumber evidence="1">5.6.1.7</ecNumber>
    </recommendedName>
    <alternativeName>
        <fullName evidence="1">60 kDa chaperonin</fullName>
    </alternativeName>
    <alternativeName>
        <fullName evidence="1">Chaperonin-60</fullName>
        <shortName evidence="1">Cpn60</shortName>
    </alternativeName>
</protein>
<comment type="function">
    <text evidence="1">Together with its co-chaperonin GroES, plays an essential role in assisting protein folding. The GroEL-GroES system forms a nano-cage that allows encapsulation of the non-native substrate proteins and provides a physical environment optimized to promote and accelerate protein folding.</text>
</comment>
<comment type="catalytic activity">
    <reaction evidence="1">
        <text>ATP + H2O + a folded polypeptide = ADP + phosphate + an unfolded polypeptide.</text>
        <dbReference type="EC" id="5.6.1.7"/>
    </reaction>
</comment>
<comment type="subunit">
    <text evidence="1">Forms a cylinder of 14 subunits composed of two heptameric rings stacked back-to-back. Interacts with the co-chaperonin GroES.</text>
</comment>
<comment type="subcellular location">
    <subcellularLocation>
        <location evidence="1">Cytoplasm</location>
    </subcellularLocation>
</comment>
<comment type="similarity">
    <text evidence="1">Belongs to the chaperonin (HSP60) family.</text>
</comment>
<name>CH60_NAUPA</name>
<feature type="chain" id="PRO_1000147040" description="Chaperonin GroEL">
    <location>
        <begin position="1"/>
        <end position="545"/>
    </location>
</feature>
<feature type="binding site" evidence="1">
    <location>
        <begin position="30"/>
        <end position="33"/>
    </location>
    <ligand>
        <name>ATP</name>
        <dbReference type="ChEBI" id="CHEBI:30616"/>
    </ligand>
</feature>
<feature type="binding site" evidence="1">
    <location>
        <position position="51"/>
    </location>
    <ligand>
        <name>ATP</name>
        <dbReference type="ChEBI" id="CHEBI:30616"/>
    </ligand>
</feature>
<feature type="binding site" evidence="1">
    <location>
        <begin position="87"/>
        <end position="91"/>
    </location>
    <ligand>
        <name>ATP</name>
        <dbReference type="ChEBI" id="CHEBI:30616"/>
    </ligand>
</feature>
<feature type="binding site" evidence="1">
    <location>
        <position position="416"/>
    </location>
    <ligand>
        <name>ATP</name>
        <dbReference type="ChEBI" id="CHEBI:30616"/>
    </ligand>
</feature>
<feature type="binding site" evidence="1">
    <location>
        <begin position="479"/>
        <end position="481"/>
    </location>
    <ligand>
        <name>ATP</name>
        <dbReference type="ChEBI" id="CHEBI:30616"/>
    </ligand>
</feature>
<feature type="binding site" evidence="1">
    <location>
        <position position="495"/>
    </location>
    <ligand>
        <name>ATP</name>
        <dbReference type="ChEBI" id="CHEBI:30616"/>
    </ligand>
</feature>
<dbReference type="EC" id="5.6.1.7" evidence="1"/>
<dbReference type="EMBL" id="CP001279">
    <property type="protein sequence ID" value="ACM92987.1"/>
    <property type="molecule type" value="Genomic_DNA"/>
</dbReference>
<dbReference type="RefSeq" id="WP_015902039.1">
    <property type="nucleotide sequence ID" value="NC_012115.1"/>
</dbReference>
<dbReference type="SMR" id="B9L698"/>
<dbReference type="STRING" id="598659.NAMH_1496"/>
<dbReference type="KEGG" id="nam:NAMH_1496"/>
<dbReference type="eggNOG" id="COG0459">
    <property type="taxonomic scope" value="Bacteria"/>
</dbReference>
<dbReference type="HOGENOM" id="CLU_016503_3_0_7"/>
<dbReference type="OrthoDB" id="9766614at2"/>
<dbReference type="Proteomes" id="UP000000448">
    <property type="component" value="Chromosome"/>
</dbReference>
<dbReference type="GO" id="GO:0005737">
    <property type="term" value="C:cytoplasm"/>
    <property type="evidence" value="ECO:0007669"/>
    <property type="project" value="UniProtKB-SubCell"/>
</dbReference>
<dbReference type="GO" id="GO:0005524">
    <property type="term" value="F:ATP binding"/>
    <property type="evidence" value="ECO:0007669"/>
    <property type="project" value="UniProtKB-UniRule"/>
</dbReference>
<dbReference type="GO" id="GO:0140662">
    <property type="term" value="F:ATP-dependent protein folding chaperone"/>
    <property type="evidence" value="ECO:0007669"/>
    <property type="project" value="InterPro"/>
</dbReference>
<dbReference type="GO" id="GO:0016853">
    <property type="term" value="F:isomerase activity"/>
    <property type="evidence" value="ECO:0007669"/>
    <property type="project" value="UniProtKB-KW"/>
</dbReference>
<dbReference type="GO" id="GO:0051082">
    <property type="term" value="F:unfolded protein binding"/>
    <property type="evidence" value="ECO:0007669"/>
    <property type="project" value="UniProtKB-UniRule"/>
</dbReference>
<dbReference type="GO" id="GO:0042026">
    <property type="term" value="P:protein refolding"/>
    <property type="evidence" value="ECO:0007669"/>
    <property type="project" value="UniProtKB-UniRule"/>
</dbReference>
<dbReference type="CDD" id="cd03344">
    <property type="entry name" value="GroEL"/>
    <property type="match status" value="1"/>
</dbReference>
<dbReference type="FunFam" id="3.50.7.10:FF:000001">
    <property type="entry name" value="60 kDa chaperonin"/>
    <property type="match status" value="1"/>
</dbReference>
<dbReference type="Gene3D" id="3.50.7.10">
    <property type="entry name" value="GroEL"/>
    <property type="match status" value="1"/>
</dbReference>
<dbReference type="Gene3D" id="1.10.560.10">
    <property type="entry name" value="GroEL-like equatorial domain"/>
    <property type="match status" value="1"/>
</dbReference>
<dbReference type="Gene3D" id="3.30.260.10">
    <property type="entry name" value="TCP-1-like chaperonin intermediate domain"/>
    <property type="match status" value="1"/>
</dbReference>
<dbReference type="HAMAP" id="MF_00600">
    <property type="entry name" value="CH60"/>
    <property type="match status" value="1"/>
</dbReference>
<dbReference type="InterPro" id="IPR018370">
    <property type="entry name" value="Chaperonin_Cpn60_CS"/>
</dbReference>
<dbReference type="InterPro" id="IPR001844">
    <property type="entry name" value="Cpn60/GroEL"/>
</dbReference>
<dbReference type="InterPro" id="IPR002423">
    <property type="entry name" value="Cpn60/GroEL/TCP-1"/>
</dbReference>
<dbReference type="InterPro" id="IPR027409">
    <property type="entry name" value="GroEL-like_apical_dom_sf"/>
</dbReference>
<dbReference type="InterPro" id="IPR027413">
    <property type="entry name" value="GROEL-like_equatorial_sf"/>
</dbReference>
<dbReference type="InterPro" id="IPR027410">
    <property type="entry name" value="TCP-1-like_intermed_sf"/>
</dbReference>
<dbReference type="NCBIfam" id="TIGR02348">
    <property type="entry name" value="GroEL"/>
    <property type="match status" value="1"/>
</dbReference>
<dbReference type="NCBIfam" id="NF000592">
    <property type="entry name" value="PRK00013.1"/>
    <property type="match status" value="1"/>
</dbReference>
<dbReference type="NCBIfam" id="NF009487">
    <property type="entry name" value="PRK12849.1"/>
    <property type="match status" value="1"/>
</dbReference>
<dbReference type="NCBIfam" id="NF009488">
    <property type="entry name" value="PRK12850.1"/>
    <property type="match status" value="1"/>
</dbReference>
<dbReference type="NCBIfam" id="NF009489">
    <property type="entry name" value="PRK12851.1"/>
    <property type="match status" value="1"/>
</dbReference>
<dbReference type="PANTHER" id="PTHR45633">
    <property type="entry name" value="60 KDA HEAT SHOCK PROTEIN, MITOCHONDRIAL"/>
    <property type="match status" value="1"/>
</dbReference>
<dbReference type="Pfam" id="PF00118">
    <property type="entry name" value="Cpn60_TCP1"/>
    <property type="match status" value="1"/>
</dbReference>
<dbReference type="PRINTS" id="PR00298">
    <property type="entry name" value="CHAPERONIN60"/>
</dbReference>
<dbReference type="SUPFAM" id="SSF52029">
    <property type="entry name" value="GroEL apical domain-like"/>
    <property type="match status" value="1"/>
</dbReference>
<dbReference type="SUPFAM" id="SSF48592">
    <property type="entry name" value="GroEL equatorial domain-like"/>
    <property type="match status" value="1"/>
</dbReference>
<dbReference type="SUPFAM" id="SSF54849">
    <property type="entry name" value="GroEL-intermediate domain like"/>
    <property type="match status" value="1"/>
</dbReference>
<dbReference type="PROSITE" id="PS00296">
    <property type="entry name" value="CHAPERONINS_CPN60"/>
    <property type="match status" value="1"/>
</dbReference>
<organism>
    <name type="scientific">Nautilia profundicola (strain ATCC BAA-1463 / DSM 18972 / AmH)</name>
    <dbReference type="NCBI Taxonomy" id="598659"/>
    <lineage>
        <taxon>Bacteria</taxon>
        <taxon>Pseudomonadati</taxon>
        <taxon>Campylobacterota</taxon>
        <taxon>Epsilonproteobacteria</taxon>
        <taxon>Nautiliales</taxon>
        <taxon>Nautiliaceae</taxon>
        <taxon>Nautilia</taxon>
    </lineage>
</organism>
<reference key="1">
    <citation type="journal article" date="2009" name="PLoS Genet.">
        <title>Adaptations to submarine hydrothermal environments exemplified by the genome of Nautilia profundicola.</title>
        <authorList>
            <person name="Campbell B.J."/>
            <person name="Smith J.L."/>
            <person name="Hanson T.E."/>
            <person name="Klotz M.G."/>
            <person name="Stein L.Y."/>
            <person name="Lee C.K."/>
            <person name="Wu D."/>
            <person name="Robinson J.M."/>
            <person name="Khouri H.M."/>
            <person name="Eisen J.A."/>
            <person name="Cary S.C."/>
        </authorList>
    </citation>
    <scope>NUCLEOTIDE SEQUENCE [LARGE SCALE GENOMIC DNA]</scope>
    <source>
        <strain>ATCC BAA-1463 / DSM 18972 / AmH</strain>
    </source>
</reference>
<proteinExistence type="inferred from homology"/>
<keyword id="KW-0067">ATP-binding</keyword>
<keyword id="KW-0143">Chaperone</keyword>
<keyword id="KW-0963">Cytoplasm</keyword>
<keyword id="KW-0413">Isomerase</keyword>
<keyword id="KW-0547">Nucleotide-binding</keyword>